<reference key="1">
    <citation type="journal article" date="2011" name="Toxicon">
        <title>Diversity of conotoxin types from Conus californicus reflects a diversity of prey types and a novel evolutionary history.</title>
        <authorList>
            <person name="Elliger C.A."/>
            <person name="Richmond T.A."/>
            <person name="Lebaric Z.N."/>
            <person name="Pierce N.T."/>
            <person name="Sweedler J.V."/>
            <person name="Gilly W.F."/>
        </authorList>
    </citation>
    <scope>NUCLEOTIDE SEQUENCE [MRNA]</scope>
    <source>
        <tissue>Venom duct</tissue>
    </source>
</reference>
<dbReference type="EMBL" id="GU332644">
    <property type="protein sequence ID" value="ADC35042.1"/>
    <property type="molecule type" value="mRNA"/>
</dbReference>
<dbReference type="ConoServer" id="4056">
    <property type="toxin name" value="Cal8.2 precursor"/>
</dbReference>
<dbReference type="GO" id="GO:0005576">
    <property type="term" value="C:extracellular region"/>
    <property type="evidence" value="ECO:0007669"/>
    <property type="project" value="UniProtKB-SubCell"/>
</dbReference>
<dbReference type="GO" id="GO:0099106">
    <property type="term" value="F:ion channel regulator activity"/>
    <property type="evidence" value="ECO:0007669"/>
    <property type="project" value="UniProtKB-KW"/>
</dbReference>
<dbReference type="GO" id="GO:0090729">
    <property type="term" value="F:toxin activity"/>
    <property type="evidence" value="ECO:0007669"/>
    <property type="project" value="UniProtKB-KW"/>
</dbReference>
<keyword id="KW-1015">Disulfide bond</keyword>
<keyword id="KW-0872">Ion channel impairing toxin</keyword>
<keyword id="KW-0528">Neurotoxin</keyword>
<keyword id="KW-0964">Secreted</keyword>
<keyword id="KW-0732">Signal</keyword>
<keyword id="KW-0800">Toxin</keyword>
<evidence type="ECO:0000255" key="1"/>
<evidence type="ECO:0000303" key="2">
    <source>
    </source>
</evidence>
<evidence type="ECO:0000305" key="3"/>
<evidence type="ECO:0000305" key="4">
    <source>
    </source>
</evidence>
<protein>
    <recommendedName>
        <fullName evidence="3">Conotoxin Cal8.2</fullName>
    </recommendedName>
    <alternativeName>
        <fullName evidence="2">Conotoxin CalMKLL-2</fullName>
    </alternativeName>
</protein>
<comment type="function">
    <text evidence="3">Probable neurotoxin with unknown target. Possibly targets ion channels.</text>
</comment>
<comment type="subcellular location">
    <subcellularLocation>
        <location evidence="4">Secreted</location>
    </subcellularLocation>
</comment>
<comment type="tissue specificity">
    <text evidence="4">Expressed by the venom duct.</text>
</comment>
<comment type="domain">
    <text>The cysteine framework is C-C-C-C-C-C-C-C-C.</text>
</comment>
<comment type="PTM">
    <text evidence="3">Contains 4 disulfide bonds.</text>
</comment>
<accession>D3JYA6</accession>
<organism>
    <name type="scientific">Californiconus californicus</name>
    <name type="common">California cone</name>
    <name type="synonym">Conus californicus</name>
    <dbReference type="NCBI Taxonomy" id="1736779"/>
    <lineage>
        <taxon>Eukaryota</taxon>
        <taxon>Metazoa</taxon>
        <taxon>Spiralia</taxon>
        <taxon>Lophotrochozoa</taxon>
        <taxon>Mollusca</taxon>
        <taxon>Gastropoda</taxon>
        <taxon>Caenogastropoda</taxon>
        <taxon>Neogastropoda</taxon>
        <taxon>Conoidea</taxon>
        <taxon>Conidae</taxon>
        <taxon>Californiconus</taxon>
    </lineage>
</organism>
<feature type="signal peptide" evidence="1">
    <location>
        <begin position="1"/>
        <end position="19"/>
    </location>
</feature>
<feature type="propeptide" id="PRO_0000414996" evidence="4">
    <location>
        <begin position="20"/>
        <end position="38"/>
    </location>
</feature>
<feature type="peptide" id="PRO_5000570823" description="Conotoxin Cal8.2" evidence="4">
    <location>
        <begin position="39"/>
        <end position="131"/>
    </location>
</feature>
<proteinExistence type="evidence at transcript level"/>
<sequence>MKLLLTLLLGSALMCITLADECGLGTHRPVKEVIDNVRTMYYCDCRAGDAERSITVSRCDDNNQKQDDVILTYCGLEQTTGCNTNPYTAAKHDSSGDKPQFYCSCLNYKYEQSHADSRYWTIRCYMGDICD</sequence>
<name>CU82_CONCL</name>